<name>RF3_SHEDO</name>
<dbReference type="EMBL" id="CP000302">
    <property type="protein sequence ID" value="ABE54309.1"/>
    <property type="molecule type" value="Genomic_DNA"/>
</dbReference>
<dbReference type="RefSeq" id="WP_011495473.1">
    <property type="nucleotide sequence ID" value="NC_007954.1"/>
</dbReference>
<dbReference type="SMR" id="Q12QG7"/>
<dbReference type="STRING" id="318161.Sden_1021"/>
<dbReference type="KEGG" id="sdn:Sden_1021"/>
<dbReference type="eggNOG" id="COG4108">
    <property type="taxonomic scope" value="Bacteria"/>
</dbReference>
<dbReference type="HOGENOM" id="CLU_002794_2_1_6"/>
<dbReference type="OrthoDB" id="9804431at2"/>
<dbReference type="Proteomes" id="UP000001982">
    <property type="component" value="Chromosome"/>
</dbReference>
<dbReference type="GO" id="GO:0005829">
    <property type="term" value="C:cytosol"/>
    <property type="evidence" value="ECO:0007669"/>
    <property type="project" value="TreeGrafter"/>
</dbReference>
<dbReference type="GO" id="GO:0005525">
    <property type="term" value="F:GTP binding"/>
    <property type="evidence" value="ECO:0007669"/>
    <property type="project" value="UniProtKB-UniRule"/>
</dbReference>
<dbReference type="GO" id="GO:0003924">
    <property type="term" value="F:GTPase activity"/>
    <property type="evidence" value="ECO:0007669"/>
    <property type="project" value="InterPro"/>
</dbReference>
<dbReference type="GO" id="GO:0097216">
    <property type="term" value="F:guanosine tetraphosphate binding"/>
    <property type="evidence" value="ECO:0007669"/>
    <property type="project" value="UniProtKB-ARBA"/>
</dbReference>
<dbReference type="GO" id="GO:0016150">
    <property type="term" value="F:translation release factor activity, codon nonspecific"/>
    <property type="evidence" value="ECO:0007669"/>
    <property type="project" value="TreeGrafter"/>
</dbReference>
<dbReference type="GO" id="GO:0016149">
    <property type="term" value="F:translation release factor activity, codon specific"/>
    <property type="evidence" value="ECO:0007669"/>
    <property type="project" value="UniProtKB-UniRule"/>
</dbReference>
<dbReference type="GO" id="GO:0006449">
    <property type="term" value="P:regulation of translational termination"/>
    <property type="evidence" value="ECO:0007669"/>
    <property type="project" value="UniProtKB-UniRule"/>
</dbReference>
<dbReference type="CDD" id="cd04169">
    <property type="entry name" value="RF3"/>
    <property type="match status" value="1"/>
</dbReference>
<dbReference type="CDD" id="cd03689">
    <property type="entry name" value="RF3_II"/>
    <property type="match status" value="1"/>
</dbReference>
<dbReference type="CDD" id="cd16259">
    <property type="entry name" value="RF3_III"/>
    <property type="match status" value="1"/>
</dbReference>
<dbReference type="FunFam" id="2.40.30.10:FF:000040">
    <property type="entry name" value="Peptide chain release factor 3"/>
    <property type="match status" value="1"/>
</dbReference>
<dbReference type="FunFam" id="3.30.70.3280:FF:000001">
    <property type="entry name" value="Peptide chain release factor 3"/>
    <property type="match status" value="1"/>
</dbReference>
<dbReference type="FunFam" id="3.40.50.300:FF:000542">
    <property type="entry name" value="Peptide chain release factor 3"/>
    <property type="match status" value="1"/>
</dbReference>
<dbReference type="Gene3D" id="3.40.50.300">
    <property type="entry name" value="P-loop containing nucleotide triphosphate hydrolases"/>
    <property type="match status" value="2"/>
</dbReference>
<dbReference type="Gene3D" id="3.30.70.3280">
    <property type="entry name" value="Peptide chain release factor 3, domain III"/>
    <property type="match status" value="1"/>
</dbReference>
<dbReference type="HAMAP" id="MF_00072">
    <property type="entry name" value="Rel_fac_3"/>
    <property type="match status" value="1"/>
</dbReference>
<dbReference type="InterPro" id="IPR053905">
    <property type="entry name" value="EF-G-like_DII"/>
</dbReference>
<dbReference type="InterPro" id="IPR035647">
    <property type="entry name" value="EFG_III/V"/>
</dbReference>
<dbReference type="InterPro" id="IPR031157">
    <property type="entry name" value="G_TR_CS"/>
</dbReference>
<dbReference type="InterPro" id="IPR027417">
    <property type="entry name" value="P-loop_NTPase"/>
</dbReference>
<dbReference type="InterPro" id="IPR004548">
    <property type="entry name" value="PrfC"/>
</dbReference>
<dbReference type="InterPro" id="IPR032090">
    <property type="entry name" value="RF3_C"/>
</dbReference>
<dbReference type="InterPro" id="IPR038467">
    <property type="entry name" value="RF3_dom_3_sf"/>
</dbReference>
<dbReference type="InterPro" id="IPR041732">
    <property type="entry name" value="RF3_GTP-bd"/>
</dbReference>
<dbReference type="InterPro" id="IPR005225">
    <property type="entry name" value="Small_GTP-bd"/>
</dbReference>
<dbReference type="InterPro" id="IPR000795">
    <property type="entry name" value="T_Tr_GTP-bd_dom"/>
</dbReference>
<dbReference type="InterPro" id="IPR009000">
    <property type="entry name" value="Transl_B-barrel_sf"/>
</dbReference>
<dbReference type="NCBIfam" id="TIGR00503">
    <property type="entry name" value="prfC"/>
    <property type="match status" value="1"/>
</dbReference>
<dbReference type="NCBIfam" id="NF001964">
    <property type="entry name" value="PRK00741.1"/>
    <property type="match status" value="1"/>
</dbReference>
<dbReference type="NCBIfam" id="TIGR00231">
    <property type="entry name" value="small_GTP"/>
    <property type="match status" value="1"/>
</dbReference>
<dbReference type="PANTHER" id="PTHR43556">
    <property type="entry name" value="PEPTIDE CHAIN RELEASE FACTOR RF3"/>
    <property type="match status" value="1"/>
</dbReference>
<dbReference type="PANTHER" id="PTHR43556:SF2">
    <property type="entry name" value="PEPTIDE CHAIN RELEASE FACTOR RF3"/>
    <property type="match status" value="1"/>
</dbReference>
<dbReference type="Pfam" id="PF22042">
    <property type="entry name" value="EF-G_D2"/>
    <property type="match status" value="1"/>
</dbReference>
<dbReference type="Pfam" id="PF00009">
    <property type="entry name" value="GTP_EFTU"/>
    <property type="match status" value="1"/>
</dbReference>
<dbReference type="Pfam" id="PF16658">
    <property type="entry name" value="RF3_C"/>
    <property type="match status" value="1"/>
</dbReference>
<dbReference type="PRINTS" id="PR00315">
    <property type="entry name" value="ELONGATNFCT"/>
</dbReference>
<dbReference type="SUPFAM" id="SSF54980">
    <property type="entry name" value="EF-G C-terminal domain-like"/>
    <property type="match status" value="1"/>
</dbReference>
<dbReference type="SUPFAM" id="SSF52540">
    <property type="entry name" value="P-loop containing nucleoside triphosphate hydrolases"/>
    <property type="match status" value="1"/>
</dbReference>
<dbReference type="SUPFAM" id="SSF50447">
    <property type="entry name" value="Translation proteins"/>
    <property type="match status" value="1"/>
</dbReference>
<dbReference type="PROSITE" id="PS00301">
    <property type="entry name" value="G_TR_1"/>
    <property type="match status" value="1"/>
</dbReference>
<dbReference type="PROSITE" id="PS51722">
    <property type="entry name" value="G_TR_2"/>
    <property type="match status" value="1"/>
</dbReference>
<protein>
    <recommendedName>
        <fullName evidence="1">Peptide chain release factor 3</fullName>
        <shortName evidence="1">RF-3</shortName>
    </recommendedName>
</protein>
<evidence type="ECO:0000255" key="1">
    <source>
        <dbReference type="HAMAP-Rule" id="MF_00072"/>
    </source>
</evidence>
<accession>Q12QG7</accession>
<reference key="1">
    <citation type="submission" date="2006-03" db="EMBL/GenBank/DDBJ databases">
        <title>Complete sequence of Shewanella denitrificans OS217.</title>
        <authorList>
            <consortium name="US DOE Joint Genome Institute"/>
            <person name="Copeland A."/>
            <person name="Lucas S."/>
            <person name="Lapidus A."/>
            <person name="Barry K."/>
            <person name="Detter J.C."/>
            <person name="Glavina del Rio T."/>
            <person name="Hammon N."/>
            <person name="Israni S."/>
            <person name="Dalin E."/>
            <person name="Tice H."/>
            <person name="Pitluck S."/>
            <person name="Brettin T."/>
            <person name="Bruce D."/>
            <person name="Han C."/>
            <person name="Tapia R."/>
            <person name="Gilna P."/>
            <person name="Kiss H."/>
            <person name="Schmutz J."/>
            <person name="Larimer F."/>
            <person name="Land M."/>
            <person name="Hauser L."/>
            <person name="Kyrpides N."/>
            <person name="Lykidis A."/>
            <person name="Richardson P."/>
        </authorList>
    </citation>
    <scope>NUCLEOTIDE SEQUENCE [LARGE SCALE GENOMIC DNA]</scope>
    <source>
        <strain>OS217 / ATCC BAA-1090 / DSM 15013</strain>
    </source>
</reference>
<sequence length="527" mass="59414">MLGNHAEVDIRRTFAIISHPDAGKTTITEKVLLFGQAIQVAGTVKGRGSKQHAKSDWMEMEKDRGISITTSVMQFPYKDCLVNLLDTPGHEDFSEDTYRTLTAVDSCLMVIDAAKGVEDRTRKLMEVTRLRDTPIITFMNKCDRDIRDPMEVMDEVENELKIACAPITWPIGCGKSFKGVYHLHRDETILYQSGLGHMMQEVRIVKGLDNPELDKAIGSELAEQLREELELVIGASHEFELAAFLKGELTPVYFGTALGNFGVDHMLDGLTQWAPKPQPRQTEVREVTSLDSDFSGFIFKIQANMDPKHRDRVAFMRVVSGKYEKGMKMHHVRVGKDVRISDALTFVAGDREQVEEAYPGDIIGLHNHGTIQIGDTFTQGEKLKFTGIPNFAPEMFRRIRLKDPLKQKQLLKGLVQLAEEGAVQVFRPLDNNDLIVGAVGVLQFEVVVGRLKSEYNVEAIYEAINVSTARWVYCKDERKLEEFRRKCSVNLALDGGNNLTYIAPTMVNLNLSMERYPDVAFAKTREN</sequence>
<comment type="function">
    <text evidence="1">Increases the formation of ribosomal termination complexes and stimulates activities of RF-1 and RF-2. It binds guanine nucleotides and has strong preference for UGA stop codons. It may interact directly with the ribosome. The stimulation of RF-1 and RF-2 is significantly reduced by GTP and GDP, but not by GMP.</text>
</comment>
<comment type="subcellular location">
    <subcellularLocation>
        <location evidence="1">Cytoplasm</location>
    </subcellularLocation>
</comment>
<comment type="similarity">
    <text evidence="1">Belongs to the TRAFAC class translation factor GTPase superfamily. Classic translation factor GTPase family. PrfC subfamily.</text>
</comment>
<proteinExistence type="inferred from homology"/>
<organism>
    <name type="scientific">Shewanella denitrificans (strain OS217 / ATCC BAA-1090 / DSM 15013)</name>
    <dbReference type="NCBI Taxonomy" id="318161"/>
    <lineage>
        <taxon>Bacteria</taxon>
        <taxon>Pseudomonadati</taxon>
        <taxon>Pseudomonadota</taxon>
        <taxon>Gammaproteobacteria</taxon>
        <taxon>Alteromonadales</taxon>
        <taxon>Shewanellaceae</taxon>
        <taxon>Shewanella</taxon>
    </lineage>
</organism>
<gene>
    <name evidence="1" type="primary">prfC</name>
    <name type="ordered locus">Sden_1021</name>
</gene>
<keyword id="KW-0963">Cytoplasm</keyword>
<keyword id="KW-0342">GTP-binding</keyword>
<keyword id="KW-0547">Nucleotide-binding</keyword>
<keyword id="KW-0648">Protein biosynthesis</keyword>
<keyword id="KW-1185">Reference proteome</keyword>
<feature type="chain" id="PRO_1000075167" description="Peptide chain release factor 3">
    <location>
        <begin position="1"/>
        <end position="527"/>
    </location>
</feature>
<feature type="domain" description="tr-type G">
    <location>
        <begin position="9"/>
        <end position="278"/>
    </location>
</feature>
<feature type="binding site" evidence="1">
    <location>
        <begin position="18"/>
        <end position="25"/>
    </location>
    <ligand>
        <name>GTP</name>
        <dbReference type="ChEBI" id="CHEBI:37565"/>
    </ligand>
</feature>
<feature type="binding site" evidence="1">
    <location>
        <begin position="86"/>
        <end position="90"/>
    </location>
    <ligand>
        <name>GTP</name>
        <dbReference type="ChEBI" id="CHEBI:37565"/>
    </ligand>
</feature>
<feature type="binding site" evidence="1">
    <location>
        <begin position="140"/>
        <end position="143"/>
    </location>
    <ligand>
        <name>GTP</name>
        <dbReference type="ChEBI" id="CHEBI:37565"/>
    </ligand>
</feature>